<dbReference type="EMBL" id="BA000001">
    <property type="protein sequence ID" value="BAA30869.1"/>
    <property type="status" value="ALT_INIT"/>
    <property type="molecule type" value="Genomic_DNA"/>
</dbReference>
<dbReference type="PIR" id="F71184">
    <property type="entry name" value="F71184"/>
</dbReference>
<dbReference type="RefSeq" id="WP_010885819.1">
    <property type="nucleotide sequence ID" value="NC_000961.1"/>
</dbReference>
<dbReference type="SMR" id="O59441"/>
<dbReference type="STRING" id="70601.gene:9378752"/>
<dbReference type="EnsemblBacteria" id="BAA30869">
    <property type="protein sequence ID" value="BAA30869"/>
    <property type="gene ID" value="BAA30869"/>
</dbReference>
<dbReference type="GeneID" id="1442600"/>
<dbReference type="KEGG" id="pho:PH1755"/>
<dbReference type="eggNOG" id="arCOG00779">
    <property type="taxonomic scope" value="Archaea"/>
</dbReference>
<dbReference type="OrthoDB" id="9418at2157"/>
<dbReference type="Proteomes" id="UP000000752">
    <property type="component" value="Chromosome"/>
</dbReference>
<dbReference type="GO" id="GO:0022625">
    <property type="term" value="C:cytosolic large ribosomal subunit"/>
    <property type="evidence" value="ECO:0007669"/>
    <property type="project" value="TreeGrafter"/>
</dbReference>
<dbReference type="GO" id="GO:0019843">
    <property type="term" value="F:rRNA binding"/>
    <property type="evidence" value="ECO:0007669"/>
    <property type="project" value="UniProtKB-UniRule"/>
</dbReference>
<dbReference type="GO" id="GO:0003735">
    <property type="term" value="F:structural constituent of ribosome"/>
    <property type="evidence" value="ECO:0007669"/>
    <property type="project" value="InterPro"/>
</dbReference>
<dbReference type="GO" id="GO:0006412">
    <property type="term" value="P:translation"/>
    <property type="evidence" value="ECO:0007669"/>
    <property type="project" value="UniProtKB-UniRule"/>
</dbReference>
<dbReference type="FunFam" id="4.10.990.10:FF:000001">
    <property type="entry name" value="50S ribosomal protein L15"/>
    <property type="match status" value="1"/>
</dbReference>
<dbReference type="Gene3D" id="3.100.10.10">
    <property type="match status" value="1"/>
</dbReference>
<dbReference type="Gene3D" id="4.10.990.10">
    <property type="match status" value="1"/>
</dbReference>
<dbReference type="HAMAP" id="MF_01341">
    <property type="entry name" value="Ribosomal_uL15"/>
    <property type="match status" value="1"/>
</dbReference>
<dbReference type="InterPro" id="IPR027386">
    <property type="entry name" value="Rbsml_uL15_N"/>
</dbReference>
<dbReference type="InterPro" id="IPR030878">
    <property type="entry name" value="Ribosomal_uL15"/>
</dbReference>
<dbReference type="InterPro" id="IPR021131">
    <property type="entry name" value="Ribosomal_uL15/eL18"/>
</dbReference>
<dbReference type="InterPro" id="IPR036227">
    <property type="entry name" value="Ribosomal_uL15/eL18_sf"/>
</dbReference>
<dbReference type="InterPro" id="IPR001196">
    <property type="entry name" value="Ribosomal_uL15_CS"/>
</dbReference>
<dbReference type="PANTHER" id="PTHR11721">
    <property type="entry name" value="60S RIBOSOMAL PROTEIN L27A"/>
    <property type="match status" value="1"/>
</dbReference>
<dbReference type="PANTHER" id="PTHR11721:SF3">
    <property type="entry name" value="LARGE RIBOSOMAL SUBUNIT PROTEIN UL15"/>
    <property type="match status" value="1"/>
</dbReference>
<dbReference type="Pfam" id="PF00828">
    <property type="entry name" value="Ribosomal_L27A"/>
    <property type="match status" value="1"/>
</dbReference>
<dbReference type="SUPFAM" id="SSF52080">
    <property type="entry name" value="Ribosomal proteins L15p and L18e"/>
    <property type="match status" value="1"/>
</dbReference>
<dbReference type="PROSITE" id="PS00475">
    <property type="entry name" value="RIBOSOMAL_L15"/>
    <property type="match status" value="1"/>
</dbReference>
<name>RL15_PYRHO</name>
<comment type="function">
    <text evidence="1">Binds to the 23S rRNA.</text>
</comment>
<comment type="subunit">
    <text evidence="1">Part of the 50S ribosomal subunit.</text>
</comment>
<comment type="similarity">
    <text evidence="1">Belongs to the universal ribosomal protein uL15 family.</text>
</comment>
<comment type="sequence caution" evidence="3">
    <conflict type="erroneous initiation">
        <sequence resource="EMBL-CDS" id="BAA30869"/>
    </conflict>
    <text>Extended N-terminus.</text>
</comment>
<proteinExistence type="inferred from homology"/>
<gene>
    <name evidence="1" type="primary">rpl15</name>
    <name type="ordered locus">PH1755</name>
</gene>
<feature type="chain" id="PRO_0000104872" description="Large ribosomal subunit protein uL15">
    <location>
        <begin position="1"/>
        <end position="147"/>
    </location>
</feature>
<feature type="region of interest" description="Disordered" evidence="2">
    <location>
        <begin position="1"/>
        <end position="43"/>
    </location>
</feature>
<feature type="compositionally biased region" description="Basic residues" evidence="2">
    <location>
        <begin position="1"/>
        <end position="28"/>
    </location>
</feature>
<feature type="compositionally biased region" description="Gly residues" evidence="2">
    <location>
        <begin position="29"/>
        <end position="38"/>
    </location>
</feature>
<protein>
    <recommendedName>
        <fullName evidence="1">Large ribosomal subunit protein uL15</fullName>
    </recommendedName>
    <alternativeName>
        <fullName evidence="3">50S ribosomal protein L15</fullName>
    </alternativeName>
</protein>
<reference key="1">
    <citation type="journal article" date="1998" name="DNA Res.">
        <title>Complete sequence and gene organization of the genome of a hyper-thermophilic archaebacterium, Pyrococcus horikoshii OT3.</title>
        <authorList>
            <person name="Kawarabayasi Y."/>
            <person name="Sawada M."/>
            <person name="Horikawa H."/>
            <person name="Haikawa Y."/>
            <person name="Hino Y."/>
            <person name="Yamamoto S."/>
            <person name="Sekine M."/>
            <person name="Baba S."/>
            <person name="Kosugi H."/>
            <person name="Hosoyama A."/>
            <person name="Nagai Y."/>
            <person name="Sakai M."/>
            <person name="Ogura K."/>
            <person name="Otsuka R."/>
            <person name="Nakazawa H."/>
            <person name="Takamiya M."/>
            <person name="Ohfuku Y."/>
            <person name="Funahashi T."/>
            <person name="Tanaka T."/>
            <person name="Kudoh Y."/>
            <person name="Yamazaki J."/>
            <person name="Kushida N."/>
            <person name="Oguchi A."/>
            <person name="Aoki K."/>
            <person name="Yoshizawa T."/>
            <person name="Nakamura Y."/>
            <person name="Robb F.T."/>
            <person name="Horikoshi K."/>
            <person name="Masuchi Y."/>
            <person name="Shizuya H."/>
            <person name="Kikuchi H."/>
        </authorList>
    </citation>
    <scope>NUCLEOTIDE SEQUENCE [LARGE SCALE GENOMIC DNA]</scope>
    <source>
        <strain>ATCC 700860 / DSM 12428 / JCM 9974 / NBRC 100139 / OT-3</strain>
    </source>
</reference>
<accession>O59441</accession>
<organism>
    <name type="scientific">Pyrococcus horikoshii (strain ATCC 700860 / DSM 12428 / JCM 9974 / NBRC 100139 / OT-3)</name>
    <dbReference type="NCBI Taxonomy" id="70601"/>
    <lineage>
        <taxon>Archaea</taxon>
        <taxon>Methanobacteriati</taxon>
        <taxon>Methanobacteriota</taxon>
        <taxon>Thermococci</taxon>
        <taxon>Thermococcales</taxon>
        <taxon>Thermococcaceae</taxon>
        <taxon>Pyrococcus</taxon>
    </lineage>
</organism>
<evidence type="ECO:0000255" key="1">
    <source>
        <dbReference type="HAMAP-Rule" id="MF_01341"/>
    </source>
</evidence>
<evidence type="ECO:0000256" key="2">
    <source>
        <dbReference type="SAM" id="MobiDB-lite"/>
    </source>
</evidence>
<evidence type="ECO:0000305" key="3"/>
<keyword id="KW-0687">Ribonucleoprotein</keyword>
<keyword id="KW-0689">Ribosomal protein</keyword>
<keyword id="KW-0694">RNA-binding</keyword>
<keyword id="KW-0699">rRNA-binding</keyword>
<sequence>MIRRRKKVRKLRGSHTHGWGCKKKHRGGGSKGGRGMAGTGKRNKSKWTWTIKYAPDHLGKRGFSRPPEVQRDVRIVTLKFIDEHLEDLLQMGIAYEEEGKIVVDTTQFADKVLGTGRLTRPLTIKAKAFSAKAEEKIKAAGGEVILA</sequence>